<feature type="chain" id="PRO_0000370208" description="Actin-related protein 8">
    <location>
        <begin position="1"/>
        <end position="873"/>
    </location>
</feature>
<feature type="region of interest" description="Disordered" evidence="5">
    <location>
        <begin position="108"/>
        <end position="129"/>
    </location>
</feature>
<feature type="region of interest" description="Disordered" evidence="5">
    <location>
        <begin position="596"/>
        <end position="701"/>
    </location>
</feature>
<feature type="coiled-coil region" evidence="4">
    <location>
        <begin position="762"/>
        <end position="804"/>
    </location>
</feature>
<feature type="compositionally biased region" description="Low complexity" evidence="5">
    <location>
        <begin position="114"/>
        <end position="123"/>
    </location>
</feature>
<feature type="compositionally biased region" description="Low complexity" evidence="5">
    <location>
        <begin position="596"/>
        <end position="650"/>
    </location>
</feature>
<feature type="compositionally biased region" description="Polar residues" evidence="5">
    <location>
        <begin position="651"/>
        <end position="668"/>
    </location>
</feature>
<feature type="compositionally biased region" description="Low complexity" evidence="5">
    <location>
        <begin position="669"/>
        <end position="696"/>
    </location>
</feature>
<feature type="binding site" evidence="1">
    <location>
        <begin position="368"/>
        <end position="371"/>
    </location>
    <ligand>
        <name>ATP</name>
        <dbReference type="ChEBI" id="CHEBI:30616"/>
    </ligand>
</feature>
<dbReference type="EMBL" id="AAFI02000104">
    <property type="protein sequence ID" value="EAL63536.1"/>
    <property type="molecule type" value="Genomic_DNA"/>
</dbReference>
<dbReference type="RefSeq" id="XP_637047.1">
    <property type="nucleotide sequence ID" value="XM_631955.1"/>
</dbReference>
<dbReference type="STRING" id="44689.Q54JV5"/>
<dbReference type="GlyGen" id="Q54JV5">
    <property type="glycosylation" value="1 site"/>
</dbReference>
<dbReference type="PaxDb" id="44689-DDB0234011"/>
<dbReference type="EnsemblProtists" id="EAL63536">
    <property type="protein sequence ID" value="EAL63536"/>
    <property type="gene ID" value="DDB_G0287779"/>
</dbReference>
<dbReference type="GeneID" id="8626301"/>
<dbReference type="KEGG" id="ddi:DDB_G0287779"/>
<dbReference type="dictyBase" id="DDB_G0287779">
    <property type="gene designation" value="arpG"/>
</dbReference>
<dbReference type="VEuPathDB" id="AmoebaDB:DDB_G0287779"/>
<dbReference type="eggNOG" id="KOG0797">
    <property type="taxonomic scope" value="Eukaryota"/>
</dbReference>
<dbReference type="HOGENOM" id="CLU_329136_0_0_1"/>
<dbReference type="InParanoid" id="Q54JV5"/>
<dbReference type="OMA" id="MWKYAIQ"/>
<dbReference type="PRO" id="PR:Q54JV5"/>
<dbReference type="Proteomes" id="UP000002195">
    <property type="component" value="Chromosome 5"/>
</dbReference>
<dbReference type="GO" id="GO:0005737">
    <property type="term" value="C:cytoplasm"/>
    <property type="evidence" value="ECO:0007669"/>
    <property type="project" value="UniProtKB-KW"/>
</dbReference>
<dbReference type="GO" id="GO:0005856">
    <property type="term" value="C:cytoskeleton"/>
    <property type="evidence" value="ECO:0007669"/>
    <property type="project" value="UniProtKB-SubCell"/>
</dbReference>
<dbReference type="GO" id="GO:0031011">
    <property type="term" value="C:Ino80 complex"/>
    <property type="evidence" value="ECO:0000318"/>
    <property type="project" value="GO_Central"/>
</dbReference>
<dbReference type="GO" id="GO:0005524">
    <property type="term" value="F:ATP binding"/>
    <property type="evidence" value="ECO:0007669"/>
    <property type="project" value="UniProtKB-KW"/>
</dbReference>
<dbReference type="GO" id="GO:0006325">
    <property type="term" value="P:chromatin organization"/>
    <property type="evidence" value="ECO:0007669"/>
    <property type="project" value="UniProtKB-KW"/>
</dbReference>
<dbReference type="GO" id="GO:0006310">
    <property type="term" value="P:DNA recombination"/>
    <property type="evidence" value="ECO:0007669"/>
    <property type="project" value="UniProtKB-KW"/>
</dbReference>
<dbReference type="GO" id="GO:0006302">
    <property type="term" value="P:double-strand break repair"/>
    <property type="evidence" value="ECO:0000318"/>
    <property type="project" value="GO_Central"/>
</dbReference>
<dbReference type="GO" id="GO:0006355">
    <property type="term" value="P:regulation of DNA-templated transcription"/>
    <property type="evidence" value="ECO:0000318"/>
    <property type="project" value="GO_Central"/>
</dbReference>
<dbReference type="Gene3D" id="3.30.420.40">
    <property type="match status" value="3"/>
</dbReference>
<dbReference type="InterPro" id="IPR004000">
    <property type="entry name" value="Actin"/>
</dbReference>
<dbReference type="InterPro" id="IPR043129">
    <property type="entry name" value="ATPase_NBD"/>
</dbReference>
<dbReference type="PANTHER" id="PTHR11937">
    <property type="entry name" value="ACTIN"/>
    <property type="match status" value="1"/>
</dbReference>
<dbReference type="Pfam" id="PF00022">
    <property type="entry name" value="Actin"/>
    <property type="match status" value="1"/>
</dbReference>
<dbReference type="SMART" id="SM00268">
    <property type="entry name" value="ACTIN"/>
    <property type="match status" value="1"/>
</dbReference>
<dbReference type="SUPFAM" id="SSF53067">
    <property type="entry name" value="Actin-like ATPase domain"/>
    <property type="match status" value="3"/>
</dbReference>
<gene>
    <name evidence="6" type="primary">arpG</name>
    <name evidence="2" type="synonym">actr8</name>
    <name type="ORF">DDB_G0287779</name>
</gene>
<keyword id="KW-0067">ATP-binding</keyword>
<keyword id="KW-0156">Chromatin regulator</keyword>
<keyword id="KW-0175">Coiled coil</keyword>
<keyword id="KW-0963">Cytoplasm</keyword>
<keyword id="KW-0206">Cytoskeleton</keyword>
<keyword id="KW-0227">DNA damage</keyword>
<keyword id="KW-0233">DNA recombination</keyword>
<keyword id="KW-0234">DNA repair</keyword>
<keyword id="KW-0547">Nucleotide-binding</keyword>
<keyword id="KW-0539">Nucleus</keyword>
<keyword id="KW-1185">Reference proteome</keyword>
<keyword id="KW-0804">Transcription</keyword>
<keyword id="KW-0805">Transcription regulation</keyword>
<name>ARP8_DICDI</name>
<comment type="function">
    <text evidence="1">Plays an important role in the functional organization of mitotic chromosomes. Exhibits low basal ATPase activity, and unable to polymerize (By similarity).</text>
</comment>
<comment type="function">
    <text evidence="1">Proposed core component of the chromatin remodeling INO80 complex which is involved in transcriptional regulation, DNA replication and probably DNA repair. Strongly prefer nucleosomes and H3-H4 tetramers over H2A-H2B dimers, suggesting it may act as a nucleosome recognition module within the complex (By similarity).</text>
</comment>
<comment type="subunit">
    <text evidence="1">Component of the chromatin remodeling INO80 complex. Exists as monomers and dimers, but the dimer is most probably the biologically relevant form required for stable interactions with histones that exploits the twofold symmetry of the nucleosome core (By similarity).</text>
</comment>
<comment type="subcellular location">
    <subcellularLocation>
        <location evidence="1">Nucleus</location>
    </subcellularLocation>
    <subcellularLocation>
        <location evidence="2 3">Cytoplasm</location>
        <location evidence="2 3">Cytoskeleton</location>
    </subcellularLocation>
</comment>
<comment type="similarity">
    <text evidence="4">Belongs to the actin family. ARP8 subfamily.</text>
</comment>
<accession>Q54JV5</accession>
<sequence>MESKVIVIHHGSHSLKIGLASESVPKTIPNYIARKKKEKISTPTITTTETPTIVSPVESTIINNKSNENNDDIMKIDVENTVTPSEAVGTTTEDVKSTLPMATTITTDEQVKPTSSTSSTSTTEEVEIKPTESMDIDKPITDSKTNITSNIKIEQPPPPINIQTQTKIHIPKKLLEEVEQSVKETTKLLPPVDYIKVRQKPTLYNENNSTTFEIIKKKKKKTSSLSSLTNVSTTPPPYVPQPLNYNEIDYCIGDDAIAVSRDKDKWFAYQPITMSTFNTGIYHSVQSMFDDITQMWKYAIQRYLNIPSSDLSSYGCVYVVTDNIDRKSLKQITTLLLKELQFTSVLFFQESICSSFGVSMATQSCVIDLGHQKISIACVDEGYLLPNTRLTLGYGGEQLTKLLEYLLTGMDKSDSDTLTRQMVAKQIHKYYFPFKSSIYELVDFSPFYLNVFDNIKIENLDYYYNDFQKQRVGTFKVKDIKHDKHMNIYHFNADEVYQVVGMSLFYPNILSQFGGSSVNYLIKSRSLANTSESNLYVEDQKHYYNHYLSSYDHEDPFDDHSHILSFAQNNTSRDNKDGSNNNNIINNNIINNIINNNNNNNNNSSSSSNNNNNNNNSGSNSNINSYNNNNNNNNNNNNNNNNNNNNSFNNVTIVTSTLNSNSTVPSTLNSNSTVPSISNSNSTVPSTSTSTTSSPTKKLKIESSSNCEDNYIDIPLDIAILKSVSQLERSDINKKKYLSNILLVGGGALAPGIQDVLRVCIFKQLEQQYQAQQLQFQQQLQQQQQQQQQLQQQLQNSTNSATTTPTPSSTTIMPLENYIGFANSSIRSDVDCRHAGWRGGAILGCLESTREIWITRSEWQDGKNSSALNKLPF</sequence>
<protein>
    <recommendedName>
        <fullName evidence="2 6">Actin-related protein 8</fullName>
    </recommendedName>
</protein>
<evidence type="ECO:0000250" key="1"/>
<evidence type="ECO:0000250" key="2">
    <source>
        <dbReference type="UniProtKB" id="Q8R2S9"/>
    </source>
</evidence>
<evidence type="ECO:0000250" key="3">
    <source>
        <dbReference type="UniProtKB" id="Q9VX09"/>
    </source>
</evidence>
<evidence type="ECO:0000255" key="4"/>
<evidence type="ECO:0000256" key="5">
    <source>
        <dbReference type="SAM" id="MobiDB-lite"/>
    </source>
</evidence>
<evidence type="ECO:0000312" key="6">
    <source>
        <dbReference type="EMBL" id="EAL63536.1"/>
    </source>
</evidence>
<reference key="1">
    <citation type="journal article" date="2005" name="Nature">
        <title>The genome of the social amoeba Dictyostelium discoideum.</title>
        <authorList>
            <person name="Eichinger L."/>
            <person name="Pachebat J.A."/>
            <person name="Gloeckner G."/>
            <person name="Rajandream M.A."/>
            <person name="Sucgang R."/>
            <person name="Berriman M."/>
            <person name="Song J."/>
            <person name="Olsen R."/>
            <person name="Szafranski K."/>
            <person name="Xu Q."/>
            <person name="Tunggal B."/>
            <person name="Kummerfeld S."/>
            <person name="Madera M."/>
            <person name="Konfortov B.A."/>
            <person name="Rivero F."/>
            <person name="Bankier A.T."/>
            <person name="Lehmann R."/>
            <person name="Hamlin N."/>
            <person name="Davies R."/>
            <person name="Gaudet P."/>
            <person name="Fey P."/>
            <person name="Pilcher K."/>
            <person name="Chen G."/>
            <person name="Saunders D."/>
            <person name="Sodergren E.J."/>
            <person name="Davis P."/>
            <person name="Kerhornou A."/>
            <person name="Nie X."/>
            <person name="Hall N."/>
            <person name="Anjard C."/>
            <person name="Hemphill L."/>
            <person name="Bason N."/>
            <person name="Farbrother P."/>
            <person name="Desany B."/>
            <person name="Just E."/>
            <person name="Morio T."/>
            <person name="Rost R."/>
            <person name="Churcher C.M."/>
            <person name="Cooper J."/>
            <person name="Haydock S."/>
            <person name="van Driessche N."/>
            <person name="Cronin A."/>
            <person name="Goodhead I."/>
            <person name="Muzny D.M."/>
            <person name="Mourier T."/>
            <person name="Pain A."/>
            <person name="Lu M."/>
            <person name="Harper D."/>
            <person name="Lindsay R."/>
            <person name="Hauser H."/>
            <person name="James K.D."/>
            <person name="Quiles M."/>
            <person name="Madan Babu M."/>
            <person name="Saito T."/>
            <person name="Buchrieser C."/>
            <person name="Wardroper A."/>
            <person name="Felder M."/>
            <person name="Thangavelu M."/>
            <person name="Johnson D."/>
            <person name="Knights A."/>
            <person name="Loulseged H."/>
            <person name="Mungall K.L."/>
            <person name="Oliver K."/>
            <person name="Price C."/>
            <person name="Quail M.A."/>
            <person name="Urushihara H."/>
            <person name="Hernandez J."/>
            <person name="Rabbinowitsch E."/>
            <person name="Steffen D."/>
            <person name="Sanders M."/>
            <person name="Ma J."/>
            <person name="Kohara Y."/>
            <person name="Sharp S."/>
            <person name="Simmonds M.N."/>
            <person name="Spiegler S."/>
            <person name="Tivey A."/>
            <person name="Sugano S."/>
            <person name="White B."/>
            <person name="Walker D."/>
            <person name="Woodward J.R."/>
            <person name="Winckler T."/>
            <person name="Tanaka Y."/>
            <person name="Shaulsky G."/>
            <person name="Schleicher M."/>
            <person name="Weinstock G.M."/>
            <person name="Rosenthal A."/>
            <person name="Cox E.C."/>
            <person name="Chisholm R.L."/>
            <person name="Gibbs R.A."/>
            <person name="Loomis W.F."/>
            <person name="Platzer M."/>
            <person name="Kay R.R."/>
            <person name="Williams J.G."/>
            <person name="Dear P.H."/>
            <person name="Noegel A.A."/>
            <person name="Barrell B.G."/>
            <person name="Kuspa A."/>
        </authorList>
    </citation>
    <scope>NUCLEOTIDE SEQUENCE [LARGE SCALE GENOMIC DNA]</scope>
    <source>
        <strain>AX4</strain>
    </source>
</reference>
<proteinExistence type="inferred from homology"/>
<organism>
    <name type="scientific">Dictyostelium discoideum</name>
    <name type="common">Social amoeba</name>
    <dbReference type="NCBI Taxonomy" id="44689"/>
    <lineage>
        <taxon>Eukaryota</taxon>
        <taxon>Amoebozoa</taxon>
        <taxon>Evosea</taxon>
        <taxon>Eumycetozoa</taxon>
        <taxon>Dictyostelia</taxon>
        <taxon>Dictyosteliales</taxon>
        <taxon>Dictyosteliaceae</taxon>
        <taxon>Dictyostelium</taxon>
    </lineage>
</organism>